<reference key="1">
    <citation type="submission" date="2009-02" db="EMBL/GenBank/DDBJ databases">
        <title>Genome sequence of Bacillus cereus 03BB102.</title>
        <authorList>
            <person name="Dodson R.J."/>
            <person name="Jackson P."/>
            <person name="Munk A.C."/>
            <person name="Brettin T."/>
            <person name="Bruce D."/>
            <person name="Detter C."/>
            <person name="Tapia R."/>
            <person name="Han C."/>
            <person name="Sutton G."/>
            <person name="Sims D."/>
        </authorList>
    </citation>
    <scope>NUCLEOTIDE SEQUENCE [LARGE SCALE GENOMIC DNA]</scope>
    <source>
        <strain>03BB102</strain>
    </source>
</reference>
<dbReference type="EC" id="2.7.7.23" evidence="1"/>
<dbReference type="EC" id="2.3.1.157" evidence="1"/>
<dbReference type="EMBL" id="CP001407">
    <property type="protein sequence ID" value="ACO26297.1"/>
    <property type="molecule type" value="Genomic_DNA"/>
</dbReference>
<dbReference type="RefSeq" id="WP_000071032.1">
    <property type="nucleotide sequence ID" value="NZ_CP009318.1"/>
</dbReference>
<dbReference type="SMR" id="C1ESX9"/>
<dbReference type="GeneID" id="45020089"/>
<dbReference type="KEGG" id="bcx:BCA_0059"/>
<dbReference type="PATRIC" id="fig|572264.18.peg.112"/>
<dbReference type="UniPathway" id="UPA00113">
    <property type="reaction ID" value="UER00532"/>
</dbReference>
<dbReference type="UniPathway" id="UPA00113">
    <property type="reaction ID" value="UER00533"/>
</dbReference>
<dbReference type="UniPathway" id="UPA00973"/>
<dbReference type="Proteomes" id="UP000002210">
    <property type="component" value="Chromosome"/>
</dbReference>
<dbReference type="GO" id="GO:0005737">
    <property type="term" value="C:cytoplasm"/>
    <property type="evidence" value="ECO:0007669"/>
    <property type="project" value="UniProtKB-SubCell"/>
</dbReference>
<dbReference type="GO" id="GO:0016020">
    <property type="term" value="C:membrane"/>
    <property type="evidence" value="ECO:0007669"/>
    <property type="project" value="GOC"/>
</dbReference>
<dbReference type="GO" id="GO:0019134">
    <property type="term" value="F:glucosamine-1-phosphate N-acetyltransferase activity"/>
    <property type="evidence" value="ECO:0007669"/>
    <property type="project" value="UniProtKB-UniRule"/>
</dbReference>
<dbReference type="GO" id="GO:0000287">
    <property type="term" value="F:magnesium ion binding"/>
    <property type="evidence" value="ECO:0007669"/>
    <property type="project" value="UniProtKB-UniRule"/>
</dbReference>
<dbReference type="GO" id="GO:0003977">
    <property type="term" value="F:UDP-N-acetylglucosamine diphosphorylase activity"/>
    <property type="evidence" value="ECO:0007669"/>
    <property type="project" value="UniProtKB-UniRule"/>
</dbReference>
<dbReference type="GO" id="GO:0000902">
    <property type="term" value="P:cell morphogenesis"/>
    <property type="evidence" value="ECO:0007669"/>
    <property type="project" value="UniProtKB-UniRule"/>
</dbReference>
<dbReference type="GO" id="GO:0071555">
    <property type="term" value="P:cell wall organization"/>
    <property type="evidence" value="ECO:0007669"/>
    <property type="project" value="UniProtKB-KW"/>
</dbReference>
<dbReference type="GO" id="GO:0009245">
    <property type="term" value="P:lipid A biosynthetic process"/>
    <property type="evidence" value="ECO:0007669"/>
    <property type="project" value="UniProtKB-UniRule"/>
</dbReference>
<dbReference type="GO" id="GO:0009252">
    <property type="term" value="P:peptidoglycan biosynthetic process"/>
    <property type="evidence" value="ECO:0007669"/>
    <property type="project" value="UniProtKB-UniRule"/>
</dbReference>
<dbReference type="GO" id="GO:0008360">
    <property type="term" value="P:regulation of cell shape"/>
    <property type="evidence" value="ECO:0007669"/>
    <property type="project" value="UniProtKB-KW"/>
</dbReference>
<dbReference type="GO" id="GO:0006048">
    <property type="term" value="P:UDP-N-acetylglucosamine biosynthetic process"/>
    <property type="evidence" value="ECO:0007669"/>
    <property type="project" value="UniProtKB-UniPathway"/>
</dbReference>
<dbReference type="CDD" id="cd02540">
    <property type="entry name" value="GT2_GlmU_N_bac"/>
    <property type="match status" value="1"/>
</dbReference>
<dbReference type="CDD" id="cd03353">
    <property type="entry name" value="LbH_GlmU_C"/>
    <property type="match status" value="1"/>
</dbReference>
<dbReference type="FunFam" id="2.160.10.10:FF:000016">
    <property type="entry name" value="Bifunctional protein GlmU"/>
    <property type="match status" value="1"/>
</dbReference>
<dbReference type="FunFam" id="3.90.550.10:FF:000006">
    <property type="entry name" value="Bifunctional protein GlmU"/>
    <property type="match status" value="1"/>
</dbReference>
<dbReference type="Gene3D" id="2.160.10.10">
    <property type="entry name" value="Hexapeptide repeat proteins"/>
    <property type="match status" value="1"/>
</dbReference>
<dbReference type="Gene3D" id="3.90.550.10">
    <property type="entry name" value="Spore Coat Polysaccharide Biosynthesis Protein SpsA, Chain A"/>
    <property type="match status" value="1"/>
</dbReference>
<dbReference type="HAMAP" id="MF_01631">
    <property type="entry name" value="GlmU"/>
    <property type="match status" value="1"/>
</dbReference>
<dbReference type="InterPro" id="IPR005882">
    <property type="entry name" value="Bifunctional_GlmU"/>
</dbReference>
<dbReference type="InterPro" id="IPR050065">
    <property type="entry name" value="GlmU-like"/>
</dbReference>
<dbReference type="InterPro" id="IPR038009">
    <property type="entry name" value="GlmU_C_LbH"/>
</dbReference>
<dbReference type="InterPro" id="IPR001451">
    <property type="entry name" value="Hexapep"/>
</dbReference>
<dbReference type="InterPro" id="IPR018357">
    <property type="entry name" value="Hexapep_transf_CS"/>
</dbReference>
<dbReference type="InterPro" id="IPR005835">
    <property type="entry name" value="NTP_transferase_dom"/>
</dbReference>
<dbReference type="InterPro" id="IPR029044">
    <property type="entry name" value="Nucleotide-diphossugar_trans"/>
</dbReference>
<dbReference type="InterPro" id="IPR011004">
    <property type="entry name" value="Trimer_LpxA-like_sf"/>
</dbReference>
<dbReference type="NCBIfam" id="TIGR01173">
    <property type="entry name" value="glmU"/>
    <property type="match status" value="1"/>
</dbReference>
<dbReference type="NCBIfam" id="NF010934">
    <property type="entry name" value="PRK14354.1"/>
    <property type="match status" value="1"/>
</dbReference>
<dbReference type="PANTHER" id="PTHR43584:SF3">
    <property type="entry name" value="BIFUNCTIONAL PROTEIN GLMU"/>
    <property type="match status" value="1"/>
</dbReference>
<dbReference type="PANTHER" id="PTHR43584">
    <property type="entry name" value="NUCLEOTIDYL TRANSFERASE"/>
    <property type="match status" value="1"/>
</dbReference>
<dbReference type="Pfam" id="PF00132">
    <property type="entry name" value="Hexapep"/>
    <property type="match status" value="3"/>
</dbReference>
<dbReference type="Pfam" id="PF00483">
    <property type="entry name" value="NTP_transferase"/>
    <property type="match status" value="1"/>
</dbReference>
<dbReference type="SUPFAM" id="SSF53448">
    <property type="entry name" value="Nucleotide-diphospho-sugar transferases"/>
    <property type="match status" value="1"/>
</dbReference>
<dbReference type="SUPFAM" id="SSF51161">
    <property type="entry name" value="Trimeric LpxA-like enzymes"/>
    <property type="match status" value="1"/>
</dbReference>
<dbReference type="PROSITE" id="PS00101">
    <property type="entry name" value="HEXAPEP_TRANSFERASES"/>
    <property type="match status" value="1"/>
</dbReference>
<evidence type="ECO:0000255" key="1">
    <source>
        <dbReference type="HAMAP-Rule" id="MF_01631"/>
    </source>
</evidence>
<comment type="function">
    <text evidence="1">Catalyzes the last two sequential reactions in the de novo biosynthetic pathway for UDP-N-acetylglucosamine (UDP-GlcNAc). The C-terminal domain catalyzes the transfer of acetyl group from acetyl coenzyme A to glucosamine-1-phosphate (GlcN-1-P) to produce N-acetylglucosamine-1-phosphate (GlcNAc-1-P), which is converted into UDP-GlcNAc by the transfer of uridine 5-monophosphate (from uridine 5-triphosphate), a reaction catalyzed by the N-terminal domain.</text>
</comment>
<comment type="catalytic activity">
    <reaction evidence="1">
        <text>alpha-D-glucosamine 1-phosphate + acetyl-CoA = N-acetyl-alpha-D-glucosamine 1-phosphate + CoA + H(+)</text>
        <dbReference type="Rhea" id="RHEA:13725"/>
        <dbReference type="ChEBI" id="CHEBI:15378"/>
        <dbReference type="ChEBI" id="CHEBI:57287"/>
        <dbReference type="ChEBI" id="CHEBI:57288"/>
        <dbReference type="ChEBI" id="CHEBI:57776"/>
        <dbReference type="ChEBI" id="CHEBI:58516"/>
        <dbReference type="EC" id="2.3.1.157"/>
    </reaction>
</comment>
<comment type="catalytic activity">
    <reaction evidence="1">
        <text>N-acetyl-alpha-D-glucosamine 1-phosphate + UTP + H(+) = UDP-N-acetyl-alpha-D-glucosamine + diphosphate</text>
        <dbReference type="Rhea" id="RHEA:13509"/>
        <dbReference type="ChEBI" id="CHEBI:15378"/>
        <dbReference type="ChEBI" id="CHEBI:33019"/>
        <dbReference type="ChEBI" id="CHEBI:46398"/>
        <dbReference type="ChEBI" id="CHEBI:57705"/>
        <dbReference type="ChEBI" id="CHEBI:57776"/>
        <dbReference type="EC" id="2.7.7.23"/>
    </reaction>
</comment>
<comment type="cofactor">
    <cofactor evidence="1">
        <name>Mg(2+)</name>
        <dbReference type="ChEBI" id="CHEBI:18420"/>
    </cofactor>
    <text evidence="1">Binds 1 Mg(2+) ion per subunit.</text>
</comment>
<comment type="pathway">
    <text evidence="1">Nucleotide-sugar biosynthesis; UDP-N-acetyl-alpha-D-glucosamine biosynthesis; N-acetyl-alpha-D-glucosamine 1-phosphate from alpha-D-glucosamine 6-phosphate (route II): step 2/2.</text>
</comment>
<comment type="pathway">
    <text evidence="1">Nucleotide-sugar biosynthesis; UDP-N-acetyl-alpha-D-glucosamine biosynthesis; UDP-N-acetyl-alpha-D-glucosamine from N-acetyl-alpha-D-glucosamine 1-phosphate: step 1/1.</text>
</comment>
<comment type="pathway">
    <text evidence="1">Bacterial outer membrane biogenesis; LPS lipid A biosynthesis.</text>
</comment>
<comment type="subunit">
    <text evidence="1">Homotrimer.</text>
</comment>
<comment type="subcellular location">
    <subcellularLocation>
        <location evidence="1">Cytoplasm</location>
    </subcellularLocation>
</comment>
<comment type="similarity">
    <text evidence="1">In the N-terminal section; belongs to the N-acetylglucosamine-1-phosphate uridyltransferase family.</text>
</comment>
<comment type="similarity">
    <text evidence="1">In the C-terminal section; belongs to the transferase hexapeptide repeat family.</text>
</comment>
<proteinExistence type="inferred from homology"/>
<accession>C1ESX9</accession>
<organism>
    <name type="scientific">Bacillus cereus (strain 03BB102)</name>
    <dbReference type="NCBI Taxonomy" id="572264"/>
    <lineage>
        <taxon>Bacteria</taxon>
        <taxon>Bacillati</taxon>
        <taxon>Bacillota</taxon>
        <taxon>Bacilli</taxon>
        <taxon>Bacillales</taxon>
        <taxon>Bacillaceae</taxon>
        <taxon>Bacillus</taxon>
        <taxon>Bacillus cereus group</taxon>
    </lineage>
</organism>
<protein>
    <recommendedName>
        <fullName evidence="1">Bifunctional protein GlmU</fullName>
    </recommendedName>
    <domain>
        <recommendedName>
            <fullName evidence="1">UDP-N-acetylglucosamine pyrophosphorylase</fullName>
            <ecNumber evidence="1">2.7.7.23</ecNumber>
        </recommendedName>
        <alternativeName>
            <fullName evidence="1">N-acetylglucosamine-1-phosphate uridyltransferase</fullName>
        </alternativeName>
    </domain>
    <domain>
        <recommendedName>
            <fullName evidence="1">Glucosamine-1-phosphate N-acetyltransferase</fullName>
            <ecNumber evidence="1">2.3.1.157</ecNumber>
        </recommendedName>
    </domain>
</protein>
<gene>
    <name evidence="1" type="primary">glmU</name>
    <name type="ordered locus">BCA_0059</name>
</gene>
<keyword id="KW-0012">Acyltransferase</keyword>
<keyword id="KW-0133">Cell shape</keyword>
<keyword id="KW-0961">Cell wall biogenesis/degradation</keyword>
<keyword id="KW-0963">Cytoplasm</keyword>
<keyword id="KW-0460">Magnesium</keyword>
<keyword id="KW-0479">Metal-binding</keyword>
<keyword id="KW-0511">Multifunctional enzyme</keyword>
<keyword id="KW-0548">Nucleotidyltransferase</keyword>
<keyword id="KW-0573">Peptidoglycan synthesis</keyword>
<keyword id="KW-0677">Repeat</keyword>
<keyword id="KW-0808">Transferase</keyword>
<name>GLMU_BACC3</name>
<sequence>MSNRFAVILAAGKGTRMKSKLYKVLHPVCGKPMVQHVVDQVSQLGLQKLVTVVGHGAEMVQEQLGNVSEFALQAEQLGTAHAVDQAAGVLANEEGTTLVICGDTPLITAETMEALLQQHKEAGAMATVLTAYIEEPAGYGRIVRNENGHVEKIVEHKDANEKELAIKEINTGTYCFDNKALFASLSKVSNDNVQGEYYLPDVIEILKNEGHIVSAYQTEHFDETLGVNDRVALSQAEIIMKNRINRKNMVNGVTIIDPSNTYISADAIIGSDTVLHPGTIIEGNTVIGSDCEIGPHTVIRDSEIGDRTTIRQSTVHDSKLGTEVSVGPFAHIRPDSVIGDEVRVGNFVEIKKTVFGNRSKASHLSYIGDAQVGEDVNLGCGSITVNYDGKNKFKTVIGNGVFIGCNSNLVAPVTVEDGAYVAAGSTITENVPSKALSVARARQVNKEDYVDQLLNKKKS</sequence>
<feature type="chain" id="PRO_1000186400" description="Bifunctional protein GlmU">
    <location>
        <begin position="1"/>
        <end position="459"/>
    </location>
</feature>
<feature type="region of interest" description="Pyrophosphorylase" evidence="1">
    <location>
        <begin position="1"/>
        <end position="230"/>
    </location>
</feature>
<feature type="region of interest" description="Linker" evidence="1">
    <location>
        <begin position="231"/>
        <end position="251"/>
    </location>
</feature>
<feature type="region of interest" description="N-acetyltransferase" evidence="1">
    <location>
        <begin position="252"/>
        <end position="459"/>
    </location>
</feature>
<feature type="active site" description="Proton acceptor" evidence="1">
    <location>
        <position position="363"/>
    </location>
</feature>
<feature type="binding site" evidence="1">
    <location>
        <begin position="9"/>
        <end position="12"/>
    </location>
    <ligand>
        <name>UDP-N-acetyl-alpha-D-glucosamine</name>
        <dbReference type="ChEBI" id="CHEBI:57705"/>
    </ligand>
</feature>
<feature type="binding site" evidence="1">
    <location>
        <position position="23"/>
    </location>
    <ligand>
        <name>UDP-N-acetyl-alpha-D-glucosamine</name>
        <dbReference type="ChEBI" id="CHEBI:57705"/>
    </ligand>
</feature>
<feature type="binding site" evidence="1">
    <location>
        <position position="73"/>
    </location>
    <ligand>
        <name>UDP-N-acetyl-alpha-D-glucosamine</name>
        <dbReference type="ChEBI" id="CHEBI:57705"/>
    </ligand>
</feature>
<feature type="binding site" evidence="1">
    <location>
        <begin position="78"/>
        <end position="79"/>
    </location>
    <ligand>
        <name>UDP-N-acetyl-alpha-D-glucosamine</name>
        <dbReference type="ChEBI" id="CHEBI:57705"/>
    </ligand>
</feature>
<feature type="binding site" evidence="1">
    <location>
        <position position="103"/>
    </location>
    <ligand>
        <name>Mg(2+)</name>
        <dbReference type="ChEBI" id="CHEBI:18420"/>
    </ligand>
</feature>
<feature type="binding site" evidence="1">
    <location>
        <position position="140"/>
    </location>
    <ligand>
        <name>UDP-N-acetyl-alpha-D-glucosamine</name>
        <dbReference type="ChEBI" id="CHEBI:57705"/>
    </ligand>
</feature>
<feature type="binding site" evidence="1">
    <location>
        <position position="155"/>
    </location>
    <ligand>
        <name>UDP-N-acetyl-alpha-D-glucosamine</name>
        <dbReference type="ChEBI" id="CHEBI:57705"/>
    </ligand>
</feature>
<feature type="binding site" evidence="1">
    <location>
        <position position="170"/>
    </location>
    <ligand>
        <name>UDP-N-acetyl-alpha-D-glucosamine</name>
        <dbReference type="ChEBI" id="CHEBI:57705"/>
    </ligand>
</feature>
<feature type="binding site" evidence="1">
    <location>
        <position position="228"/>
    </location>
    <ligand>
        <name>Mg(2+)</name>
        <dbReference type="ChEBI" id="CHEBI:18420"/>
    </ligand>
</feature>
<feature type="binding site" evidence="1">
    <location>
        <position position="228"/>
    </location>
    <ligand>
        <name>UDP-N-acetyl-alpha-D-glucosamine</name>
        <dbReference type="ChEBI" id="CHEBI:57705"/>
    </ligand>
</feature>
<feature type="binding site" evidence="1">
    <location>
        <position position="333"/>
    </location>
    <ligand>
        <name>UDP-N-acetyl-alpha-D-glucosamine</name>
        <dbReference type="ChEBI" id="CHEBI:57705"/>
    </ligand>
</feature>
<feature type="binding site" evidence="1">
    <location>
        <position position="351"/>
    </location>
    <ligand>
        <name>UDP-N-acetyl-alpha-D-glucosamine</name>
        <dbReference type="ChEBI" id="CHEBI:57705"/>
    </ligand>
</feature>
<feature type="binding site" evidence="1">
    <location>
        <position position="366"/>
    </location>
    <ligand>
        <name>UDP-N-acetyl-alpha-D-glucosamine</name>
        <dbReference type="ChEBI" id="CHEBI:57705"/>
    </ligand>
</feature>
<feature type="binding site" evidence="1">
    <location>
        <position position="377"/>
    </location>
    <ligand>
        <name>UDP-N-acetyl-alpha-D-glucosamine</name>
        <dbReference type="ChEBI" id="CHEBI:57705"/>
    </ligand>
</feature>
<feature type="binding site" evidence="1">
    <location>
        <begin position="386"/>
        <end position="387"/>
    </location>
    <ligand>
        <name>acetyl-CoA</name>
        <dbReference type="ChEBI" id="CHEBI:57288"/>
    </ligand>
</feature>
<feature type="binding site" evidence="1">
    <location>
        <position position="423"/>
    </location>
    <ligand>
        <name>acetyl-CoA</name>
        <dbReference type="ChEBI" id="CHEBI:57288"/>
    </ligand>
</feature>
<feature type="binding site" evidence="1">
    <location>
        <position position="440"/>
    </location>
    <ligand>
        <name>acetyl-CoA</name>
        <dbReference type="ChEBI" id="CHEBI:57288"/>
    </ligand>
</feature>